<reference key="1">
    <citation type="journal article" date="2006" name="J. Bacteriol.">
        <title>Pathogenomic sequence analysis of Bacillus cereus and Bacillus thuringiensis isolates closely related to Bacillus anthracis.</title>
        <authorList>
            <person name="Han C.S."/>
            <person name="Xie G."/>
            <person name="Challacombe J.F."/>
            <person name="Altherr M.R."/>
            <person name="Bhotika S.S."/>
            <person name="Bruce D."/>
            <person name="Campbell C.S."/>
            <person name="Campbell M.L."/>
            <person name="Chen J."/>
            <person name="Chertkov O."/>
            <person name="Cleland C."/>
            <person name="Dimitrijevic M."/>
            <person name="Doggett N.A."/>
            <person name="Fawcett J.J."/>
            <person name="Glavina T."/>
            <person name="Goodwin L.A."/>
            <person name="Hill K.K."/>
            <person name="Hitchcock P."/>
            <person name="Jackson P.J."/>
            <person name="Keim P."/>
            <person name="Kewalramani A.R."/>
            <person name="Longmire J."/>
            <person name="Lucas S."/>
            <person name="Malfatti S."/>
            <person name="McMurry K."/>
            <person name="Meincke L.J."/>
            <person name="Misra M."/>
            <person name="Moseman B.L."/>
            <person name="Mundt M."/>
            <person name="Munk A.C."/>
            <person name="Okinaka R.T."/>
            <person name="Parson-Quintana B."/>
            <person name="Reilly L.P."/>
            <person name="Richardson P."/>
            <person name="Robinson D.L."/>
            <person name="Rubin E."/>
            <person name="Saunders E."/>
            <person name="Tapia R."/>
            <person name="Tesmer J.G."/>
            <person name="Thayer N."/>
            <person name="Thompson L.S."/>
            <person name="Tice H."/>
            <person name="Ticknor L.O."/>
            <person name="Wills P.L."/>
            <person name="Brettin T.S."/>
            <person name="Gilna P."/>
        </authorList>
    </citation>
    <scope>NUCLEOTIDE SEQUENCE [LARGE SCALE GENOMIC DNA]</scope>
    <source>
        <strain>97-27</strain>
    </source>
</reference>
<accession>Q6HCK7</accession>
<organism>
    <name type="scientific">Bacillus thuringiensis subsp. konkukian (strain 97-27)</name>
    <dbReference type="NCBI Taxonomy" id="281309"/>
    <lineage>
        <taxon>Bacteria</taxon>
        <taxon>Bacillati</taxon>
        <taxon>Bacillota</taxon>
        <taxon>Bacilli</taxon>
        <taxon>Bacillales</taxon>
        <taxon>Bacillaceae</taxon>
        <taxon>Bacillus</taxon>
        <taxon>Bacillus cereus group</taxon>
    </lineage>
</organism>
<protein>
    <recommendedName>
        <fullName evidence="1">Large-conductance mechanosensitive channel</fullName>
    </recommendedName>
</protein>
<evidence type="ECO:0000255" key="1">
    <source>
        <dbReference type="HAMAP-Rule" id="MF_00115"/>
    </source>
</evidence>
<keyword id="KW-1003">Cell membrane</keyword>
<keyword id="KW-0407">Ion channel</keyword>
<keyword id="KW-0406">Ion transport</keyword>
<keyword id="KW-0472">Membrane</keyword>
<keyword id="KW-0812">Transmembrane</keyword>
<keyword id="KW-1133">Transmembrane helix</keyword>
<keyword id="KW-0813">Transport</keyword>
<sequence>MWNEFKKFAFKGNVIDLAVGVVIGAAFGKIVSSLVKDIITPLLGMVLGGVDFTDLKITFGKSSIMYGNFIQTIFDFLIIAAAIFMFVKVFNKLTSKREEEKEEEIPEPTKEEELLGEIRDLLKQQNSSKDRA</sequence>
<dbReference type="EMBL" id="AE017355">
    <property type="protein sequence ID" value="AAT63638.1"/>
    <property type="molecule type" value="Genomic_DNA"/>
</dbReference>
<dbReference type="RefSeq" id="WP_000267001.1">
    <property type="nucleotide sequence ID" value="NC_005957.1"/>
</dbReference>
<dbReference type="RefSeq" id="YP_038719.1">
    <property type="nucleotide sequence ID" value="NC_005957.1"/>
</dbReference>
<dbReference type="SMR" id="Q6HCK7"/>
<dbReference type="GeneID" id="45024544"/>
<dbReference type="KEGG" id="btk:BT9727_4404"/>
<dbReference type="PATRIC" id="fig|281309.8.peg.4693"/>
<dbReference type="HOGENOM" id="CLU_095787_0_0_9"/>
<dbReference type="Proteomes" id="UP000001301">
    <property type="component" value="Chromosome"/>
</dbReference>
<dbReference type="GO" id="GO:0005886">
    <property type="term" value="C:plasma membrane"/>
    <property type="evidence" value="ECO:0007669"/>
    <property type="project" value="UniProtKB-SubCell"/>
</dbReference>
<dbReference type="GO" id="GO:0008381">
    <property type="term" value="F:mechanosensitive monoatomic ion channel activity"/>
    <property type="evidence" value="ECO:0007669"/>
    <property type="project" value="UniProtKB-UniRule"/>
</dbReference>
<dbReference type="FunFam" id="1.10.1200.120:FF:000001">
    <property type="entry name" value="Large-conductance mechanosensitive channel"/>
    <property type="match status" value="1"/>
</dbReference>
<dbReference type="Gene3D" id="1.10.1200.120">
    <property type="entry name" value="Large-conductance mechanosensitive channel, MscL, domain 1"/>
    <property type="match status" value="1"/>
</dbReference>
<dbReference type="HAMAP" id="MF_00115">
    <property type="entry name" value="MscL"/>
    <property type="match status" value="1"/>
</dbReference>
<dbReference type="InterPro" id="IPR019823">
    <property type="entry name" value="Mechanosensitive_channel_CS"/>
</dbReference>
<dbReference type="InterPro" id="IPR001185">
    <property type="entry name" value="MS_channel"/>
</dbReference>
<dbReference type="InterPro" id="IPR037673">
    <property type="entry name" value="MSC/AndL"/>
</dbReference>
<dbReference type="InterPro" id="IPR036019">
    <property type="entry name" value="MscL_channel"/>
</dbReference>
<dbReference type="NCBIfam" id="TIGR00220">
    <property type="entry name" value="mscL"/>
    <property type="match status" value="1"/>
</dbReference>
<dbReference type="NCBIfam" id="NF001843">
    <property type="entry name" value="PRK00567.1-4"/>
    <property type="match status" value="1"/>
</dbReference>
<dbReference type="NCBIfam" id="NF010560">
    <property type="entry name" value="PRK13955.1"/>
    <property type="match status" value="1"/>
</dbReference>
<dbReference type="PANTHER" id="PTHR30266:SF2">
    <property type="entry name" value="LARGE-CONDUCTANCE MECHANOSENSITIVE CHANNEL"/>
    <property type="match status" value="1"/>
</dbReference>
<dbReference type="PANTHER" id="PTHR30266">
    <property type="entry name" value="MECHANOSENSITIVE CHANNEL MSCL"/>
    <property type="match status" value="1"/>
</dbReference>
<dbReference type="Pfam" id="PF01741">
    <property type="entry name" value="MscL"/>
    <property type="match status" value="1"/>
</dbReference>
<dbReference type="PRINTS" id="PR01264">
    <property type="entry name" value="MECHCHANNEL"/>
</dbReference>
<dbReference type="SUPFAM" id="SSF81330">
    <property type="entry name" value="Gated mechanosensitive channel"/>
    <property type="match status" value="1"/>
</dbReference>
<dbReference type="PROSITE" id="PS01327">
    <property type="entry name" value="MSCL"/>
    <property type="match status" value="1"/>
</dbReference>
<proteinExistence type="inferred from homology"/>
<name>MSCL_BACHK</name>
<comment type="function">
    <text evidence="1">Channel that opens in response to stretch forces in the membrane lipid bilayer. May participate in the regulation of osmotic pressure changes within the cell.</text>
</comment>
<comment type="subunit">
    <text evidence="1">Homopentamer.</text>
</comment>
<comment type="subcellular location">
    <subcellularLocation>
        <location evidence="1">Cell membrane</location>
        <topology evidence="1">Multi-pass membrane protein</topology>
    </subcellularLocation>
</comment>
<comment type="similarity">
    <text evidence="1">Belongs to the MscL family.</text>
</comment>
<feature type="chain" id="PRO_0000237974" description="Large-conductance mechanosensitive channel">
    <location>
        <begin position="1"/>
        <end position="132"/>
    </location>
</feature>
<feature type="transmembrane region" description="Helical" evidence="1">
    <location>
        <begin position="14"/>
        <end position="34"/>
    </location>
</feature>
<feature type="transmembrane region" description="Helical" evidence="1">
    <location>
        <begin position="67"/>
        <end position="87"/>
    </location>
</feature>
<gene>
    <name evidence="1" type="primary">mscL</name>
    <name type="ordered locus">BT9727_4404</name>
</gene>